<dbReference type="EMBL" id="AK122464">
    <property type="protein sequence ID" value="BAC65746.1"/>
    <property type="status" value="ALT_INIT"/>
    <property type="molecule type" value="mRNA"/>
</dbReference>
<dbReference type="EMBL" id="AK052692">
    <property type="protein sequence ID" value="BAC35099.1"/>
    <property type="molecule type" value="mRNA"/>
</dbReference>
<dbReference type="EMBL" id="AK143387">
    <property type="protein sequence ID" value="BAE25361.1"/>
    <property type="molecule type" value="mRNA"/>
</dbReference>
<dbReference type="EMBL" id="BC006045">
    <property type="protein sequence ID" value="AAH06045.1"/>
    <property type="molecule type" value="mRNA"/>
</dbReference>
<dbReference type="EMBL" id="BC028900">
    <property type="protein sequence ID" value="AAH28900.1"/>
    <property type="molecule type" value="mRNA"/>
</dbReference>
<dbReference type="CCDS" id="CCDS49097.1">
    <molecule id="Q80TI1-1"/>
</dbReference>
<dbReference type="RefSeq" id="NP_851418.2">
    <molecule id="Q80TI1-1"/>
    <property type="nucleotide sequence ID" value="NM_181073.3"/>
</dbReference>
<dbReference type="RefSeq" id="XP_006515708.1">
    <property type="nucleotide sequence ID" value="XM_006515645.2"/>
</dbReference>
<dbReference type="RefSeq" id="XP_036013196.1">
    <molecule id="Q80TI1-1"/>
    <property type="nucleotide sequence ID" value="XM_036157303.1"/>
</dbReference>
<dbReference type="SMR" id="Q80TI1"/>
<dbReference type="BioGRID" id="229275">
    <property type="interactions" value="1"/>
</dbReference>
<dbReference type="FunCoup" id="Q80TI1">
    <property type="interactions" value="1006"/>
</dbReference>
<dbReference type="STRING" id="10090.ENSMUSP00000049460"/>
<dbReference type="GlyGen" id="Q80TI1">
    <property type="glycosylation" value="3 sites"/>
</dbReference>
<dbReference type="iPTMnet" id="Q80TI1"/>
<dbReference type="PhosphoSitePlus" id="Q80TI1"/>
<dbReference type="SwissPalm" id="Q80TI1"/>
<dbReference type="jPOST" id="Q80TI1"/>
<dbReference type="PaxDb" id="10090-ENSMUSP00000049460"/>
<dbReference type="PeptideAtlas" id="Q80TI1"/>
<dbReference type="ProteomicsDB" id="289604">
    <molecule id="Q80TI1-1"/>
</dbReference>
<dbReference type="ProteomicsDB" id="289605">
    <molecule id="Q80TI1-2"/>
</dbReference>
<dbReference type="Antibodypedia" id="64198">
    <property type="antibodies" value="70 antibodies from 17 providers"/>
</dbReference>
<dbReference type="DNASU" id="211945"/>
<dbReference type="Ensembl" id="ENSMUST00000039928.7">
    <molecule id="Q80TI1-1"/>
    <property type="protein sequence ID" value="ENSMUSP00000049460.6"/>
    <property type="gene ID" value="ENSMUSG00000060716.8"/>
</dbReference>
<dbReference type="Ensembl" id="ENSMUST00000219956.2">
    <molecule id="Q80TI1-1"/>
    <property type="protein sequence ID" value="ENSMUSP00000151747.2"/>
    <property type="gene ID" value="ENSMUSG00000060716.8"/>
</dbReference>
<dbReference type="GeneID" id="211945"/>
<dbReference type="KEGG" id="mmu:211945"/>
<dbReference type="UCSC" id="uc007nzr.2">
    <molecule id="Q80TI1-1"/>
    <property type="organism name" value="mouse"/>
</dbReference>
<dbReference type="AGR" id="MGI:2144989"/>
<dbReference type="CTD" id="57475"/>
<dbReference type="MGI" id="MGI:2144989">
    <property type="gene designation" value="Plekhh1"/>
</dbReference>
<dbReference type="VEuPathDB" id="HostDB:ENSMUSG00000060716"/>
<dbReference type="eggNOG" id="KOG0248">
    <property type="taxonomic scope" value="Eukaryota"/>
</dbReference>
<dbReference type="GeneTree" id="ENSGT00940000159456"/>
<dbReference type="HOGENOM" id="CLU_001626_3_1_1"/>
<dbReference type="InParanoid" id="Q80TI1"/>
<dbReference type="OMA" id="FYPIRYR"/>
<dbReference type="OrthoDB" id="6285196at2759"/>
<dbReference type="PhylomeDB" id="Q80TI1"/>
<dbReference type="TreeFam" id="TF312866"/>
<dbReference type="BioGRID-ORCS" id="211945">
    <property type="hits" value="2 hits in 77 CRISPR screens"/>
</dbReference>
<dbReference type="ChiTaRS" id="Plekhh1">
    <property type="organism name" value="mouse"/>
</dbReference>
<dbReference type="PRO" id="PR:Q80TI1"/>
<dbReference type="Proteomes" id="UP000000589">
    <property type="component" value="Chromosome 12"/>
</dbReference>
<dbReference type="RNAct" id="Q80TI1">
    <property type="molecule type" value="protein"/>
</dbReference>
<dbReference type="Bgee" id="ENSMUSG00000060716">
    <property type="expression patterns" value="Expressed in paneth cell and 227 other cell types or tissues"/>
</dbReference>
<dbReference type="ExpressionAtlas" id="Q80TI1">
    <property type="expression patterns" value="baseline and differential"/>
</dbReference>
<dbReference type="GO" id="GO:0005856">
    <property type="term" value="C:cytoskeleton"/>
    <property type="evidence" value="ECO:0007669"/>
    <property type="project" value="InterPro"/>
</dbReference>
<dbReference type="CDD" id="cd14473">
    <property type="entry name" value="FERM_B-lobe"/>
    <property type="match status" value="1"/>
</dbReference>
<dbReference type="CDD" id="cd13206">
    <property type="entry name" value="FERM_C-lobe_PLEKHH1_PLEKHH2"/>
    <property type="match status" value="1"/>
</dbReference>
<dbReference type="CDD" id="cd13282">
    <property type="entry name" value="PH1_PLEKHH1_PLEKHH2"/>
    <property type="match status" value="1"/>
</dbReference>
<dbReference type="FunFam" id="2.30.29.30:FF:000286">
    <property type="entry name" value="PH-protein kinase domain containing protein"/>
    <property type="match status" value="1"/>
</dbReference>
<dbReference type="Gene3D" id="1.20.80.10">
    <property type="match status" value="1"/>
</dbReference>
<dbReference type="Gene3D" id="1.25.40.530">
    <property type="entry name" value="MyTH4 domain"/>
    <property type="match status" value="1"/>
</dbReference>
<dbReference type="Gene3D" id="3.10.20.90">
    <property type="entry name" value="Phosphatidylinositol 3-kinase Catalytic Subunit, Chain A, domain 1"/>
    <property type="match status" value="1"/>
</dbReference>
<dbReference type="Gene3D" id="2.30.29.30">
    <property type="entry name" value="Pleckstrin-homology domain (PH domain)/Phosphotyrosine-binding domain (PTB)"/>
    <property type="match status" value="3"/>
</dbReference>
<dbReference type="InterPro" id="IPR019749">
    <property type="entry name" value="Band_41_domain"/>
</dbReference>
<dbReference type="InterPro" id="IPR014352">
    <property type="entry name" value="FERM/acyl-CoA-bd_prot_sf"/>
</dbReference>
<dbReference type="InterPro" id="IPR035963">
    <property type="entry name" value="FERM_2"/>
</dbReference>
<dbReference type="InterPro" id="IPR019748">
    <property type="entry name" value="FERM_central"/>
</dbReference>
<dbReference type="InterPro" id="IPR000299">
    <property type="entry name" value="FERM_domain"/>
</dbReference>
<dbReference type="InterPro" id="IPR000857">
    <property type="entry name" value="MyTH4_dom"/>
</dbReference>
<dbReference type="InterPro" id="IPR038185">
    <property type="entry name" value="MyTH4_dom_sf"/>
</dbReference>
<dbReference type="InterPro" id="IPR011993">
    <property type="entry name" value="PH-like_dom_sf"/>
</dbReference>
<dbReference type="InterPro" id="IPR001849">
    <property type="entry name" value="PH_domain"/>
</dbReference>
<dbReference type="PANTHER" id="PTHR22903:SF4">
    <property type="entry name" value="PLECKSTRIN HOMOLOGY DOMAIN-CONTAINING FAMILY H MEMBER 1"/>
    <property type="match status" value="1"/>
</dbReference>
<dbReference type="PANTHER" id="PTHR22903">
    <property type="entry name" value="PLEKHH PROTEIN"/>
    <property type="match status" value="1"/>
</dbReference>
<dbReference type="Pfam" id="PF00373">
    <property type="entry name" value="FERM_M"/>
    <property type="match status" value="1"/>
</dbReference>
<dbReference type="Pfam" id="PF00784">
    <property type="entry name" value="MyTH4"/>
    <property type="match status" value="1"/>
</dbReference>
<dbReference type="Pfam" id="PF00169">
    <property type="entry name" value="PH"/>
    <property type="match status" value="1"/>
</dbReference>
<dbReference type="Pfam" id="PF21989">
    <property type="entry name" value="RA_2"/>
    <property type="match status" value="1"/>
</dbReference>
<dbReference type="SMART" id="SM00295">
    <property type="entry name" value="B41"/>
    <property type="match status" value="1"/>
</dbReference>
<dbReference type="SMART" id="SM00139">
    <property type="entry name" value="MyTH4"/>
    <property type="match status" value="1"/>
</dbReference>
<dbReference type="SMART" id="SM00233">
    <property type="entry name" value="PH"/>
    <property type="match status" value="2"/>
</dbReference>
<dbReference type="SUPFAM" id="SSF50729">
    <property type="entry name" value="PH domain-like"/>
    <property type="match status" value="2"/>
</dbReference>
<dbReference type="SUPFAM" id="SSF47031">
    <property type="entry name" value="Second domain of FERM"/>
    <property type="match status" value="1"/>
</dbReference>
<dbReference type="PROSITE" id="PS50057">
    <property type="entry name" value="FERM_3"/>
    <property type="match status" value="1"/>
</dbReference>
<dbReference type="PROSITE" id="PS51016">
    <property type="entry name" value="MYTH4"/>
    <property type="match status" value="1"/>
</dbReference>
<dbReference type="PROSITE" id="PS50003">
    <property type="entry name" value="PH_DOMAIN"/>
    <property type="match status" value="2"/>
</dbReference>
<name>PKHH1_MOUSE</name>
<reference key="1">
    <citation type="journal article" date="2003" name="DNA Res.">
        <title>Prediction of the coding sequences of mouse homologues of KIAA gene: II. The complete nucleotide sequences of 400 mouse KIAA-homologous cDNAs identified by screening of terminal sequences of cDNA clones randomly sampled from size-fractionated libraries.</title>
        <authorList>
            <person name="Okazaki N."/>
            <person name="Kikuno R."/>
            <person name="Ohara R."/>
            <person name="Inamoto S."/>
            <person name="Aizawa H."/>
            <person name="Yuasa S."/>
            <person name="Nakajima D."/>
            <person name="Nagase T."/>
            <person name="Ohara O."/>
            <person name="Koga H."/>
        </authorList>
    </citation>
    <scope>NUCLEOTIDE SEQUENCE [LARGE SCALE MRNA] (ISOFORM 1)</scope>
    <source>
        <tissue>Brain</tissue>
    </source>
</reference>
<reference key="2">
    <citation type="journal article" date="2005" name="Science">
        <title>The transcriptional landscape of the mammalian genome.</title>
        <authorList>
            <person name="Carninci P."/>
            <person name="Kasukawa T."/>
            <person name="Katayama S."/>
            <person name="Gough J."/>
            <person name="Frith M.C."/>
            <person name="Maeda N."/>
            <person name="Oyama R."/>
            <person name="Ravasi T."/>
            <person name="Lenhard B."/>
            <person name="Wells C."/>
            <person name="Kodzius R."/>
            <person name="Shimokawa K."/>
            <person name="Bajic V.B."/>
            <person name="Brenner S.E."/>
            <person name="Batalov S."/>
            <person name="Forrest A.R."/>
            <person name="Zavolan M."/>
            <person name="Davis M.J."/>
            <person name="Wilming L.G."/>
            <person name="Aidinis V."/>
            <person name="Allen J.E."/>
            <person name="Ambesi-Impiombato A."/>
            <person name="Apweiler R."/>
            <person name="Aturaliya R.N."/>
            <person name="Bailey T.L."/>
            <person name="Bansal M."/>
            <person name="Baxter L."/>
            <person name="Beisel K.W."/>
            <person name="Bersano T."/>
            <person name="Bono H."/>
            <person name="Chalk A.M."/>
            <person name="Chiu K.P."/>
            <person name="Choudhary V."/>
            <person name="Christoffels A."/>
            <person name="Clutterbuck D.R."/>
            <person name="Crowe M.L."/>
            <person name="Dalla E."/>
            <person name="Dalrymple B.P."/>
            <person name="de Bono B."/>
            <person name="Della Gatta G."/>
            <person name="di Bernardo D."/>
            <person name="Down T."/>
            <person name="Engstrom P."/>
            <person name="Fagiolini M."/>
            <person name="Faulkner G."/>
            <person name="Fletcher C.F."/>
            <person name="Fukushima T."/>
            <person name="Furuno M."/>
            <person name="Futaki S."/>
            <person name="Gariboldi M."/>
            <person name="Georgii-Hemming P."/>
            <person name="Gingeras T.R."/>
            <person name="Gojobori T."/>
            <person name="Green R.E."/>
            <person name="Gustincich S."/>
            <person name="Harbers M."/>
            <person name="Hayashi Y."/>
            <person name="Hensch T.K."/>
            <person name="Hirokawa N."/>
            <person name="Hill D."/>
            <person name="Huminiecki L."/>
            <person name="Iacono M."/>
            <person name="Ikeo K."/>
            <person name="Iwama A."/>
            <person name="Ishikawa T."/>
            <person name="Jakt M."/>
            <person name="Kanapin A."/>
            <person name="Katoh M."/>
            <person name="Kawasawa Y."/>
            <person name="Kelso J."/>
            <person name="Kitamura H."/>
            <person name="Kitano H."/>
            <person name="Kollias G."/>
            <person name="Krishnan S.P."/>
            <person name="Kruger A."/>
            <person name="Kummerfeld S.K."/>
            <person name="Kurochkin I.V."/>
            <person name="Lareau L.F."/>
            <person name="Lazarevic D."/>
            <person name="Lipovich L."/>
            <person name="Liu J."/>
            <person name="Liuni S."/>
            <person name="McWilliam S."/>
            <person name="Madan Babu M."/>
            <person name="Madera M."/>
            <person name="Marchionni L."/>
            <person name="Matsuda H."/>
            <person name="Matsuzawa S."/>
            <person name="Miki H."/>
            <person name="Mignone F."/>
            <person name="Miyake S."/>
            <person name="Morris K."/>
            <person name="Mottagui-Tabar S."/>
            <person name="Mulder N."/>
            <person name="Nakano N."/>
            <person name="Nakauchi H."/>
            <person name="Ng P."/>
            <person name="Nilsson R."/>
            <person name="Nishiguchi S."/>
            <person name="Nishikawa S."/>
            <person name="Nori F."/>
            <person name="Ohara O."/>
            <person name="Okazaki Y."/>
            <person name="Orlando V."/>
            <person name="Pang K.C."/>
            <person name="Pavan W.J."/>
            <person name="Pavesi G."/>
            <person name="Pesole G."/>
            <person name="Petrovsky N."/>
            <person name="Piazza S."/>
            <person name="Reed J."/>
            <person name="Reid J.F."/>
            <person name="Ring B.Z."/>
            <person name="Ringwald M."/>
            <person name="Rost B."/>
            <person name="Ruan Y."/>
            <person name="Salzberg S.L."/>
            <person name="Sandelin A."/>
            <person name="Schneider C."/>
            <person name="Schoenbach C."/>
            <person name="Sekiguchi K."/>
            <person name="Semple C.A."/>
            <person name="Seno S."/>
            <person name="Sessa L."/>
            <person name="Sheng Y."/>
            <person name="Shibata Y."/>
            <person name="Shimada H."/>
            <person name="Shimada K."/>
            <person name="Silva D."/>
            <person name="Sinclair B."/>
            <person name="Sperling S."/>
            <person name="Stupka E."/>
            <person name="Sugiura K."/>
            <person name="Sultana R."/>
            <person name="Takenaka Y."/>
            <person name="Taki K."/>
            <person name="Tammoja K."/>
            <person name="Tan S.L."/>
            <person name="Tang S."/>
            <person name="Taylor M.S."/>
            <person name="Tegner J."/>
            <person name="Teichmann S.A."/>
            <person name="Ueda H.R."/>
            <person name="van Nimwegen E."/>
            <person name="Verardo R."/>
            <person name="Wei C.L."/>
            <person name="Yagi K."/>
            <person name="Yamanishi H."/>
            <person name="Zabarovsky E."/>
            <person name="Zhu S."/>
            <person name="Zimmer A."/>
            <person name="Hide W."/>
            <person name="Bult C."/>
            <person name="Grimmond S.M."/>
            <person name="Teasdale R.D."/>
            <person name="Liu E.T."/>
            <person name="Brusic V."/>
            <person name="Quackenbush J."/>
            <person name="Wahlestedt C."/>
            <person name="Mattick J.S."/>
            <person name="Hume D.A."/>
            <person name="Kai C."/>
            <person name="Sasaki D."/>
            <person name="Tomaru Y."/>
            <person name="Fukuda S."/>
            <person name="Kanamori-Katayama M."/>
            <person name="Suzuki M."/>
            <person name="Aoki J."/>
            <person name="Arakawa T."/>
            <person name="Iida J."/>
            <person name="Imamura K."/>
            <person name="Itoh M."/>
            <person name="Kato T."/>
            <person name="Kawaji H."/>
            <person name="Kawagashira N."/>
            <person name="Kawashima T."/>
            <person name="Kojima M."/>
            <person name="Kondo S."/>
            <person name="Konno H."/>
            <person name="Nakano K."/>
            <person name="Ninomiya N."/>
            <person name="Nishio T."/>
            <person name="Okada M."/>
            <person name="Plessy C."/>
            <person name="Shibata K."/>
            <person name="Shiraki T."/>
            <person name="Suzuki S."/>
            <person name="Tagami M."/>
            <person name="Waki K."/>
            <person name="Watahiki A."/>
            <person name="Okamura-Oho Y."/>
            <person name="Suzuki H."/>
            <person name="Kawai J."/>
            <person name="Hayashizaki Y."/>
        </authorList>
    </citation>
    <scope>NUCLEOTIDE SEQUENCE [LARGE SCALE MRNA] (ISOFORMS 1 AND 2)</scope>
    <source>
        <strain>C57BL/6J</strain>
        <tissue>Kidney</tissue>
        <tissue>Ovary</tissue>
    </source>
</reference>
<reference key="3">
    <citation type="journal article" date="2004" name="Genome Res.">
        <title>The status, quality, and expansion of the NIH full-length cDNA project: the Mammalian Gene Collection (MGC).</title>
        <authorList>
            <consortium name="The MGC Project Team"/>
        </authorList>
    </citation>
    <scope>NUCLEOTIDE SEQUENCE [LARGE SCALE MRNA] OF 726-1356</scope>
    <source>
        <strain>Czech II</strain>
        <tissue>Mammary tumor</tissue>
    </source>
</reference>
<reference key="4">
    <citation type="journal article" date="2010" name="Cell">
        <title>A tissue-specific atlas of mouse protein phosphorylation and expression.</title>
        <authorList>
            <person name="Huttlin E.L."/>
            <person name="Jedrychowski M.P."/>
            <person name="Elias J.E."/>
            <person name="Goswami T."/>
            <person name="Rad R."/>
            <person name="Beausoleil S.A."/>
            <person name="Villen J."/>
            <person name="Haas W."/>
            <person name="Sowa M.E."/>
            <person name="Gygi S.P."/>
        </authorList>
    </citation>
    <scope>PHOSPHORYLATION [LARGE SCALE ANALYSIS] AT SER-451 AND SER-739</scope>
    <scope>IDENTIFICATION BY MASS SPECTROMETRY [LARGE SCALE ANALYSIS]</scope>
    <source>
        <tissue>Brain</tissue>
        <tissue>Kidney</tissue>
    </source>
</reference>
<gene>
    <name type="primary">Plekhh1</name>
    <name type="synonym">Kiaa1200</name>
</gene>
<feature type="chain" id="PRO_0000310949" description="Pleckstrin homology domain-containing family H member 1">
    <location>
        <begin position="1"/>
        <end position="1356"/>
    </location>
</feature>
<feature type="domain" description="PH 1" evidence="3">
    <location>
        <begin position="572"/>
        <end position="666"/>
    </location>
</feature>
<feature type="domain" description="PH 2" evidence="3">
    <location>
        <begin position="681"/>
        <end position="790"/>
    </location>
</feature>
<feature type="domain" description="MyTH4" evidence="4">
    <location>
        <begin position="826"/>
        <end position="980"/>
    </location>
</feature>
<feature type="domain" description="FERM" evidence="2">
    <location>
        <begin position="991"/>
        <end position="1327"/>
    </location>
</feature>
<feature type="region of interest" description="Disordered" evidence="5">
    <location>
        <begin position="179"/>
        <end position="203"/>
    </location>
</feature>
<feature type="region of interest" description="Disordered" evidence="5">
    <location>
        <begin position="256"/>
        <end position="314"/>
    </location>
</feature>
<feature type="region of interest" description="Disordered" evidence="5">
    <location>
        <begin position="354"/>
        <end position="414"/>
    </location>
</feature>
<feature type="coiled-coil region" evidence="1">
    <location>
        <begin position="27"/>
        <end position="172"/>
    </location>
</feature>
<feature type="coiled-coil region" evidence="1">
    <location>
        <begin position="359"/>
        <end position="407"/>
    </location>
</feature>
<feature type="compositionally biased region" description="Polar residues" evidence="5">
    <location>
        <begin position="194"/>
        <end position="203"/>
    </location>
</feature>
<feature type="compositionally biased region" description="Polar residues" evidence="5">
    <location>
        <begin position="256"/>
        <end position="265"/>
    </location>
</feature>
<feature type="compositionally biased region" description="Polar residues" evidence="5">
    <location>
        <begin position="285"/>
        <end position="297"/>
    </location>
</feature>
<feature type="compositionally biased region" description="Basic and acidic residues" evidence="5">
    <location>
        <begin position="362"/>
        <end position="377"/>
    </location>
</feature>
<feature type="compositionally biased region" description="Basic and acidic residues" evidence="5">
    <location>
        <begin position="385"/>
        <end position="399"/>
    </location>
</feature>
<feature type="modified residue" description="Phosphoserine" evidence="8">
    <location>
        <position position="451"/>
    </location>
</feature>
<feature type="modified residue" description="Phosphoserine" evidence="8">
    <location>
        <position position="739"/>
    </location>
</feature>
<feature type="splice variant" id="VSP_029350" description="In isoform 2." evidence="6">
    <location>
        <begin position="1"/>
        <end position="681"/>
    </location>
</feature>
<feature type="splice variant" id="VSP_029351" description="In isoform 2." evidence="6">
    <original>PTVKGWLTK</original>
    <variation>MCVCSCCSL</variation>
    <location>
        <begin position="682"/>
        <end position="690"/>
    </location>
</feature>
<feature type="sequence conflict" description="In Ref. 1; BAC65746." evidence="7" ref="1">
    <original>R</original>
    <variation>K</variation>
    <location>
        <position position="93"/>
    </location>
</feature>
<feature type="sequence conflict" description="In Ref. 3; AAH28900." evidence="7" ref="3">
    <original>Q</original>
    <variation>E</variation>
    <location>
        <position position="726"/>
    </location>
</feature>
<feature type="sequence conflict" description="In Ref. 3; AAH06045." evidence="7" ref="3">
    <original>YEQL</original>
    <variation>HASV</variation>
    <location>
        <begin position="800"/>
        <end position="803"/>
    </location>
</feature>
<feature type="sequence conflict" description="In Ref. 3; AAH28900." evidence="7" ref="3">
    <original>F</original>
    <variation>L</variation>
    <location>
        <position position="1016"/>
    </location>
</feature>
<feature type="sequence conflict" description="In Ref. 1; BAC65746 and 3; AAH06045/AAH28900." evidence="7" ref="1 3">
    <original>T</original>
    <variation>A</variation>
    <location>
        <position position="1156"/>
    </location>
</feature>
<feature type="sequence conflict" description="In Ref. 3; AAH06045." evidence="7" ref="3">
    <original>QHLLQQVLDRFYPR</original>
    <variation>PRPGWTVLCFCFLH</variation>
    <location>
        <begin position="1159"/>
        <end position="1172"/>
    </location>
</feature>
<feature type="sequence conflict" description="In Ref. 3; AAH28900." evidence="7" ref="3">
    <location>
        <position position="1257"/>
    </location>
</feature>
<evidence type="ECO:0000255" key="1"/>
<evidence type="ECO:0000255" key="2">
    <source>
        <dbReference type="PROSITE-ProRule" id="PRU00084"/>
    </source>
</evidence>
<evidence type="ECO:0000255" key="3">
    <source>
        <dbReference type="PROSITE-ProRule" id="PRU00145"/>
    </source>
</evidence>
<evidence type="ECO:0000255" key="4">
    <source>
        <dbReference type="PROSITE-ProRule" id="PRU00359"/>
    </source>
</evidence>
<evidence type="ECO:0000256" key="5">
    <source>
        <dbReference type="SAM" id="MobiDB-lite"/>
    </source>
</evidence>
<evidence type="ECO:0000303" key="6">
    <source>
    </source>
</evidence>
<evidence type="ECO:0000305" key="7"/>
<evidence type="ECO:0007744" key="8">
    <source>
    </source>
</evidence>
<protein>
    <recommendedName>
        <fullName>Pleckstrin homology domain-containing family H member 1</fullName>
        <shortName>PH domain-containing family H member 1</shortName>
    </recommendedName>
</protein>
<sequence>MAEVKVEVASIDWQKRCLSLETQLFRFRLQASKIRELLADKMQELEQRLLEAEQRAENAETQVGVMEEKIKLSNLKSVDSTGTLHQKYQELLRAVQGKDELISQLQAQLEKQKQTRAEEAKIVQEKAAKIKEWVTVKLAELEMENQQLKTCNQQLVEQVAALQDALEDLRMTPSEELLVVPEGTPERDPVPSGPSDQPVEQDSNPHTQILKVAVPTPSLGTLQSRDSLSEARSLEDLRFSMVHPGETAEAKTLQSHLQKEGSPSQLCMKPGNPKHGSASYRESLVTAQGGTFPGTKTSAREGGPGSSLTLPKVRAPSIPRDSFQVAKRHHSQPQVGPGHCDHVVSIEIGALSALHSPGSSKSEARAKVREEAEKMEMEALPPSGKQEERESLKSRRGELEDVELENKPPTPPLHRFPSWESRIYAMATSGMQLSEVSSRRSNAACYASGPSALAFPGAFSGLVYKNVTVPVYTALKGKATQISNVPFVDESSGSDDDCGSQASFRMSVPCSEYRKTSGLGSPRAIKRGVSMSSLSSEGDYAIPPDACSLDSDYSEPEHKLQRTSSYSTDGEALEKSGYLLKMGSRVKTWKRRWFVLRQGQILYYKSPSDVIRKPQGQVDLNSHCQIVREEEAQTFQLISGNKTYYLTAESPSLLEEWIRVLQSLLKVQVTGPPALHQGGTKPTVKGWLTKVKHGHSKLVWCALVGKTFYYYRSHEDKRPLGCLPVQDAHIEEVDRSCDSDEDYEAGGTGRLLSSHCTLVIHPPEHSPTYLLIGTKHEKDTWLYHLTVAAGGSNAKVGTVYEQLIGKLMDGEGNPDSPLWRHPMLCYSQEGLCASLTTLPSEALQTEALKLFKSCQLFINVPVEAASVDYHVSLAQTALQVCLVHPELQSEIYCQLMKQISCRPPQKYSLMQCWQLLALCAPLFLPQHHFLWYVKQQLQRHADPRSETGQYAIYCQRAVERTLQTGEREARPSRMEVVSILLRNPFHHSLPFSIPVHFANGTYQVVGFDGSSTVDEFLQRLNQETGMRKPSQSGFALFTDDPSGRDLEHCLQGRVKICDAISKWEQTLKELHPGKSEGGTRVVKLMYKNRLYFRSQVKGETERERLLLAFQASGEIVAGRFPVTKELALEMAALMAQVEYGDLEKPTLPGPGGTPPTKAQHLLQQVLDRFYPRRYRNGAPPEQLRHLADMMATKWAALQGCSPPECIRIYLTVARKWPLFGAKLFAAQPAQLSPKENTVVWIAVNEDGVSILDHRTMQVNITYPYSSVTTFGGCRDDFMLVIRSIPDQSSGKTRIDKLTFRMPAPKITETTLMMASYMNHCSATVNLSAKLPAARQPRDLDGQFFASVSCTKGSALL</sequence>
<accession>Q80TI1</accession>
<accession>Q3UPN4</accession>
<accession>Q8BWF3</accession>
<accession>Q8K334</accession>
<accession>Q99JL2</accession>
<proteinExistence type="evidence at protein level"/>
<keyword id="KW-0025">Alternative splicing</keyword>
<keyword id="KW-0175">Coiled coil</keyword>
<keyword id="KW-0597">Phosphoprotein</keyword>
<keyword id="KW-1185">Reference proteome</keyword>
<keyword id="KW-0677">Repeat</keyword>
<comment type="alternative products">
    <event type="alternative splicing"/>
    <isoform>
        <id>Q80TI1-1</id>
        <name>1</name>
        <sequence type="displayed"/>
    </isoform>
    <isoform>
        <id>Q80TI1-2</id>
        <name>2</name>
        <sequence type="described" ref="VSP_029350 VSP_029351"/>
    </isoform>
</comment>
<comment type="sequence caution" evidence="7">
    <conflict type="erroneous initiation">
        <sequence resource="EMBL-CDS" id="BAC65746"/>
    </conflict>
</comment>
<organism>
    <name type="scientific">Mus musculus</name>
    <name type="common">Mouse</name>
    <dbReference type="NCBI Taxonomy" id="10090"/>
    <lineage>
        <taxon>Eukaryota</taxon>
        <taxon>Metazoa</taxon>
        <taxon>Chordata</taxon>
        <taxon>Craniata</taxon>
        <taxon>Vertebrata</taxon>
        <taxon>Euteleostomi</taxon>
        <taxon>Mammalia</taxon>
        <taxon>Eutheria</taxon>
        <taxon>Euarchontoglires</taxon>
        <taxon>Glires</taxon>
        <taxon>Rodentia</taxon>
        <taxon>Myomorpha</taxon>
        <taxon>Muroidea</taxon>
        <taxon>Muridae</taxon>
        <taxon>Murinae</taxon>
        <taxon>Mus</taxon>
        <taxon>Mus</taxon>
    </lineage>
</organism>